<proteinExistence type="inferred from homology"/>
<reference key="1">
    <citation type="journal article" date="2009" name="PLoS Genet.">
        <title>The complete genome and proteome of Laribacter hongkongensis reveal potential mechanisms for adaptations to different temperatures and habitats.</title>
        <authorList>
            <person name="Woo P.C.Y."/>
            <person name="Lau S.K.P."/>
            <person name="Tse H."/>
            <person name="Teng J.L.L."/>
            <person name="Curreem S.O."/>
            <person name="Tsang A.K.L."/>
            <person name="Fan R.Y.Y."/>
            <person name="Wong G.K.M."/>
            <person name="Huang Y."/>
            <person name="Loman N.J."/>
            <person name="Snyder L.A.S."/>
            <person name="Cai J.J."/>
            <person name="Huang J.-D."/>
            <person name="Mak W."/>
            <person name="Pallen M.J."/>
            <person name="Lok S."/>
            <person name="Yuen K.-Y."/>
        </authorList>
    </citation>
    <scope>NUCLEOTIDE SEQUENCE [LARGE SCALE GENOMIC DNA]</scope>
    <source>
        <strain>HLHK9</strain>
    </source>
</reference>
<feature type="chain" id="PRO_1000117183" description="Phospho-N-acetylmuramoyl-pentapeptide-transferase">
    <location>
        <begin position="1"/>
        <end position="361"/>
    </location>
</feature>
<feature type="transmembrane region" description="Helical" evidence="1">
    <location>
        <begin position="25"/>
        <end position="45"/>
    </location>
</feature>
<feature type="transmembrane region" description="Helical" evidence="1">
    <location>
        <begin position="73"/>
        <end position="93"/>
    </location>
</feature>
<feature type="transmembrane region" description="Helical" evidence="1">
    <location>
        <begin position="97"/>
        <end position="117"/>
    </location>
</feature>
<feature type="transmembrane region" description="Helical" evidence="1">
    <location>
        <begin position="134"/>
        <end position="154"/>
    </location>
</feature>
<feature type="transmembrane region" description="Helical" evidence="1">
    <location>
        <begin position="168"/>
        <end position="188"/>
    </location>
</feature>
<feature type="transmembrane region" description="Helical" evidence="1">
    <location>
        <begin position="200"/>
        <end position="220"/>
    </location>
</feature>
<feature type="transmembrane region" description="Helical" evidence="1">
    <location>
        <begin position="240"/>
        <end position="260"/>
    </location>
</feature>
<feature type="transmembrane region" description="Helical" evidence="1">
    <location>
        <begin position="264"/>
        <end position="284"/>
    </location>
</feature>
<feature type="transmembrane region" description="Helical" evidence="1">
    <location>
        <begin position="289"/>
        <end position="309"/>
    </location>
</feature>
<feature type="transmembrane region" description="Helical" evidence="1">
    <location>
        <begin position="338"/>
        <end position="358"/>
    </location>
</feature>
<dbReference type="EC" id="2.7.8.13" evidence="1"/>
<dbReference type="EMBL" id="CP001154">
    <property type="protein sequence ID" value="ACO76037.1"/>
    <property type="molecule type" value="Genomic_DNA"/>
</dbReference>
<dbReference type="RefSeq" id="WP_012698500.1">
    <property type="nucleotide sequence ID" value="NC_012559.1"/>
</dbReference>
<dbReference type="SMR" id="C1D5M0"/>
<dbReference type="STRING" id="557598.LHK_03059"/>
<dbReference type="GeneID" id="75108266"/>
<dbReference type="KEGG" id="lhk:LHK_03059"/>
<dbReference type="eggNOG" id="COG0472">
    <property type="taxonomic scope" value="Bacteria"/>
</dbReference>
<dbReference type="HOGENOM" id="CLU_023982_0_0_4"/>
<dbReference type="UniPathway" id="UPA00219"/>
<dbReference type="Proteomes" id="UP000002010">
    <property type="component" value="Chromosome"/>
</dbReference>
<dbReference type="GO" id="GO:0005886">
    <property type="term" value="C:plasma membrane"/>
    <property type="evidence" value="ECO:0007669"/>
    <property type="project" value="UniProtKB-SubCell"/>
</dbReference>
<dbReference type="GO" id="GO:0046872">
    <property type="term" value="F:metal ion binding"/>
    <property type="evidence" value="ECO:0007669"/>
    <property type="project" value="UniProtKB-KW"/>
</dbReference>
<dbReference type="GO" id="GO:0008963">
    <property type="term" value="F:phospho-N-acetylmuramoyl-pentapeptide-transferase activity"/>
    <property type="evidence" value="ECO:0007669"/>
    <property type="project" value="UniProtKB-UniRule"/>
</dbReference>
<dbReference type="GO" id="GO:0051992">
    <property type="term" value="F:UDP-N-acetylmuramoyl-L-alanyl-D-glutamyl-meso-2,6-diaminopimelyl-D-alanyl-D-alanine:undecaprenyl-phosphate transferase activity"/>
    <property type="evidence" value="ECO:0007669"/>
    <property type="project" value="RHEA"/>
</dbReference>
<dbReference type="GO" id="GO:0051301">
    <property type="term" value="P:cell division"/>
    <property type="evidence" value="ECO:0007669"/>
    <property type="project" value="UniProtKB-KW"/>
</dbReference>
<dbReference type="GO" id="GO:0071555">
    <property type="term" value="P:cell wall organization"/>
    <property type="evidence" value="ECO:0007669"/>
    <property type="project" value="UniProtKB-KW"/>
</dbReference>
<dbReference type="GO" id="GO:0009252">
    <property type="term" value="P:peptidoglycan biosynthetic process"/>
    <property type="evidence" value="ECO:0007669"/>
    <property type="project" value="UniProtKB-UniRule"/>
</dbReference>
<dbReference type="GO" id="GO:0008360">
    <property type="term" value="P:regulation of cell shape"/>
    <property type="evidence" value="ECO:0007669"/>
    <property type="project" value="UniProtKB-KW"/>
</dbReference>
<dbReference type="CDD" id="cd06852">
    <property type="entry name" value="GT_MraY"/>
    <property type="match status" value="1"/>
</dbReference>
<dbReference type="HAMAP" id="MF_00038">
    <property type="entry name" value="MraY"/>
    <property type="match status" value="1"/>
</dbReference>
<dbReference type="InterPro" id="IPR000715">
    <property type="entry name" value="Glycosyl_transferase_4"/>
</dbReference>
<dbReference type="InterPro" id="IPR003524">
    <property type="entry name" value="PNAcMuramoyl-5peptid_Trfase"/>
</dbReference>
<dbReference type="InterPro" id="IPR018480">
    <property type="entry name" value="PNAcMuramoyl-5peptid_Trfase_CS"/>
</dbReference>
<dbReference type="NCBIfam" id="TIGR00445">
    <property type="entry name" value="mraY"/>
    <property type="match status" value="1"/>
</dbReference>
<dbReference type="PANTHER" id="PTHR22926">
    <property type="entry name" value="PHOSPHO-N-ACETYLMURAMOYL-PENTAPEPTIDE-TRANSFERASE"/>
    <property type="match status" value="1"/>
</dbReference>
<dbReference type="PANTHER" id="PTHR22926:SF5">
    <property type="entry name" value="PHOSPHO-N-ACETYLMURAMOYL-PENTAPEPTIDE-TRANSFERASE HOMOLOG"/>
    <property type="match status" value="1"/>
</dbReference>
<dbReference type="Pfam" id="PF00953">
    <property type="entry name" value="Glycos_transf_4"/>
    <property type="match status" value="1"/>
</dbReference>
<dbReference type="PROSITE" id="PS01348">
    <property type="entry name" value="MRAY_2"/>
    <property type="match status" value="1"/>
</dbReference>
<gene>
    <name evidence="1" type="primary">mraY</name>
    <name type="ordered locus">LHK_03059</name>
</gene>
<keyword id="KW-0131">Cell cycle</keyword>
<keyword id="KW-0132">Cell division</keyword>
<keyword id="KW-0997">Cell inner membrane</keyword>
<keyword id="KW-1003">Cell membrane</keyword>
<keyword id="KW-0133">Cell shape</keyword>
<keyword id="KW-0961">Cell wall biogenesis/degradation</keyword>
<keyword id="KW-0460">Magnesium</keyword>
<keyword id="KW-0472">Membrane</keyword>
<keyword id="KW-0479">Metal-binding</keyword>
<keyword id="KW-0573">Peptidoglycan synthesis</keyword>
<keyword id="KW-1185">Reference proteome</keyword>
<keyword id="KW-0808">Transferase</keyword>
<keyword id="KW-0812">Transmembrane</keyword>
<keyword id="KW-1133">Transmembrane helix</keyword>
<protein>
    <recommendedName>
        <fullName evidence="1">Phospho-N-acetylmuramoyl-pentapeptide-transferase</fullName>
        <ecNumber evidence="1">2.7.8.13</ecNumber>
    </recommendedName>
    <alternativeName>
        <fullName evidence="1">UDP-MurNAc-pentapeptide phosphotransferase</fullName>
    </alternativeName>
</protein>
<organism>
    <name type="scientific">Laribacter hongkongensis (strain HLHK9)</name>
    <dbReference type="NCBI Taxonomy" id="557598"/>
    <lineage>
        <taxon>Bacteria</taxon>
        <taxon>Pseudomonadati</taxon>
        <taxon>Pseudomonadota</taxon>
        <taxon>Betaproteobacteria</taxon>
        <taxon>Neisseriales</taxon>
        <taxon>Aquaspirillaceae</taxon>
        <taxon>Laribacter</taxon>
    </lineage>
</organism>
<name>MRAY_LARHH</name>
<accession>C1D5M0</accession>
<sequence>MLLWLADWLGEYVRAFNVFNYVTLRAVLASLTALGIGLALGPWVIRKLAELKVGQAVRTDGPQTHLVKTGTPTMGGTLILLSIGITTLLWADLTNKYVWLLLAVLFGTGAIGFYDDWRKVVYKDPKGISARAKMFWQSAIAIFAGIYLISTASLPAATELIVPFFKHVIYPFGVVGFCILTYFVIVGTSNAVNLTDGLDGLAAMPVVMVSAALAVFAYVAGNSVFASYLSLPHIPGAHEVAVFCAAMAGACLAFLWFNAYPAQVFMGDVGALALGAALGTVAVIVRQEIVLFVMGGLFVMEALSVMIQVASFKLTGKRVFRMAPLHHHFELKGWKETQVVVRFWIITMMLVLAGLSTLKLR</sequence>
<evidence type="ECO:0000255" key="1">
    <source>
        <dbReference type="HAMAP-Rule" id="MF_00038"/>
    </source>
</evidence>
<comment type="function">
    <text evidence="1">Catalyzes the initial step of the lipid cycle reactions in the biosynthesis of the cell wall peptidoglycan: transfers peptidoglycan precursor phospho-MurNAc-pentapeptide from UDP-MurNAc-pentapeptide onto the lipid carrier undecaprenyl phosphate, yielding undecaprenyl-pyrophosphoryl-MurNAc-pentapeptide, known as lipid I.</text>
</comment>
<comment type="catalytic activity">
    <reaction evidence="1">
        <text>UDP-N-acetyl-alpha-D-muramoyl-L-alanyl-gamma-D-glutamyl-meso-2,6-diaminopimeloyl-D-alanyl-D-alanine + di-trans,octa-cis-undecaprenyl phosphate = di-trans,octa-cis-undecaprenyl diphospho-N-acetyl-alpha-D-muramoyl-L-alanyl-D-glutamyl-meso-2,6-diaminopimeloyl-D-alanyl-D-alanine + UMP</text>
        <dbReference type="Rhea" id="RHEA:28386"/>
        <dbReference type="ChEBI" id="CHEBI:57865"/>
        <dbReference type="ChEBI" id="CHEBI:60392"/>
        <dbReference type="ChEBI" id="CHEBI:61386"/>
        <dbReference type="ChEBI" id="CHEBI:61387"/>
        <dbReference type="EC" id="2.7.8.13"/>
    </reaction>
</comment>
<comment type="cofactor">
    <cofactor evidence="1">
        <name>Mg(2+)</name>
        <dbReference type="ChEBI" id="CHEBI:18420"/>
    </cofactor>
</comment>
<comment type="pathway">
    <text evidence="1">Cell wall biogenesis; peptidoglycan biosynthesis.</text>
</comment>
<comment type="subcellular location">
    <subcellularLocation>
        <location evidence="1">Cell inner membrane</location>
        <topology evidence="1">Multi-pass membrane protein</topology>
    </subcellularLocation>
</comment>
<comment type="similarity">
    <text evidence="1">Belongs to the glycosyltransferase 4 family. MraY subfamily.</text>
</comment>